<gene>
    <name evidence="1" type="primary">proS</name>
    <name type="ordered locus">CF0762</name>
</gene>
<comment type="function">
    <text evidence="1">Catalyzes the attachment of proline to tRNA(Pro) in a two-step reaction: proline is first activated by ATP to form Pro-AMP and then transferred to the acceptor end of tRNA(Pro). As ProRS can inadvertently accommodate and process non-cognate amino acids such as alanine and cysteine, to avoid such errors it has two additional distinct editing activities against alanine. One activity is designated as 'pretransfer' editing and involves the tRNA(Pro)-independent hydrolysis of activated Ala-AMP. The other activity is designated 'posttransfer' editing and involves deacylation of mischarged Ala-tRNA(Pro). The misacylated Cys-tRNA(Pro) is not edited by ProRS.</text>
</comment>
<comment type="catalytic activity">
    <reaction evidence="1">
        <text>tRNA(Pro) + L-proline + ATP = L-prolyl-tRNA(Pro) + AMP + diphosphate</text>
        <dbReference type="Rhea" id="RHEA:14305"/>
        <dbReference type="Rhea" id="RHEA-COMP:9700"/>
        <dbReference type="Rhea" id="RHEA-COMP:9702"/>
        <dbReference type="ChEBI" id="CHEBI:30616"/>
        <dbReference type="ChEBI" id="CHEBI:33019"/>
        <dbReference type="ChEBI" id="CHEBI:60039"/>
        <dbReference type="ChEBI" id="CHEBI:78442"/>
        <dbReference type="ChEBI" id="CHEBI:78532"/>
        <dbReference type="ChEBI" id="CHEBI:456215"/>
        <dbReference type="EC" id="6.1.1.15"/>
    </reaction>
</comment>
<comment type="subunit">
    <text evidence="1">Homodimer.</text>
</comment>
<comment type="subcellular location">
    <subcellularLocation>
        <location evidence="1">Cytoplasm</location>
    </subcellularLocation>
</comment>
<comment type="domain">
    <text evidence="1">Consists of three domains: the N-terminal catalytic domain, the editing domain and the C-terminal anticodon-binding domain.</text>
</comment>
<comment type="similarity">
    <text evidence="1">Belongs to the class-II aminoacyl-tRNA synthetase family. ProS type 1 subfamily.</text>
</comment>
<proteinExistence type="inferred from homology"/>
<evidence type="ECO:0000255" key="1">
    <source>
        <dbReference type="HAMAP-Rule" id="MF_01569"/>
    </source>
</evidence>
<organism>
    <name type="scientific">Chlamydia felis (strain Fe/C-56)</name>
    <name type="common">Chlamydophila felis</name>
    <dbReference type="NCBI Taxonomy" id="264202"/>
    <lineage>
        <taxon>Bacteria</taxon>
        <taxon>Pseudomonadati</taxon>
        <taxon>Chlamydiota</taxon>
        <taxon>Chlamydiia</taxon>
        <taxon>Chlamydiales</taxon>
        <taxon>Chlamydiaceae</taxon>
        <taxon>Chlamydia/Chlamydophila group</taxon>
        <taxon>Chlamydia</taxon>
    </lineage>
</organism>
<name>SYP_CHLFF</name>
<reference key="1">
    <citation type="journal article" date="2006" name="DNA Res.">
        <title>Genome sequence of the cat pathogen, Chlamydophila felis.</title>
        <authorList>
            <person name="Azuma Y."/>
            <person name="Hirakawa H."/>
            <person name="Yamashita A."/>
            <person name="Cai Y."/>
            <person name="Rahman M.A."/>
            <person name="Suzuki H."/>
            <person name="Mitaku S."/>
            <person name="Toh H."/>
            <person name="Goto S."/>
            <person name="Murakami T."/>
            <person name="Sugi K."/>
            <person name="Hayashi H."/>
            <person name="Fukushi H."/>
            <person name="Hattori M."/>
            <person name="Kuhara S."/>
            <person name="Shirai M."/>
        </authorList>
    </citation>
    <scope>NUCLEOTIDE SEQUENCE [LARGE SCALE GENOMIC DNA]</scope>
    <source>
        <strain>Fe/C-56</strain>
    </source>
</reference>
<feature type="chain" id="PRO_0000248669" description="Proline--tRNA ligase">
    <location>
        <begin position="1"/>
        <end position="577"/>
    </location>
</feature>
<accession>Q253K4</accession>
<protein>
    <recommendedName>
        <fullName evidence="1">Proline--tRNA ligase</fullName>
        <ecNumber evidence="1">6.1.1.15</ecNumber>
    </recommendedName>
    <alternativeName>
        <fullName evidence="1">Prolyl-tRNA synthetase</fullName>
        <shortName evidence="1">ProRS</shortName>
    </alternativeName>
</protein>
<sequence>MRTSQLFYKTSKNANKDAAVLSYELLEKAGYIFKTAKGVYTYTPLFWRVALKMMDIVREELNAIGGQELMLPILHPAELWQKTGRWEAFRSEGLLYTLTDREDKELCLAPTHEEVVTMFVSQWLSGRKQLPIHLYQIATKFRDEIRPRFGLMRAREFLMEDSYTFSDSPEQMNEQYDKLRRAYQKIFDRLEIKYVIVEADGGKIGKGKSEEFHVLCSLGEDTICVSGDYGANIEAAVALPVQYTYDKEFLPIEEVATPDVRTIENLQDFFSIPPYRIMKTLVVKLSYGEKNTFVAIGIRGDRQINLTKIRSKLNADECALASDEEIQNNLGTEKGFVGPLNCPIEFYADETTRCMTNFICAGNAKDKHYKNVNWDRDIPRPEYADFLLAEAGDLCPSNGNAPYEIFEGVEVAHIFNLGTRYTECFDVGFQNEQGEQQTCWMGTYGIGIGRTLAACVEQLADDRGIVWPKAIAPFDISILYNGGDSASQEAAEKIYTELQNSGYAPLLDDRNERLGFKLKDSDLIGIPYKLILGKTFLNSGTLEIESRSGEKFSVQPKDFVHWCENYLPQSQKLSSAS</sequence>
<keyword id="KW-0030">Aminoacyl-tRNA synthetase</keyword>
<keyword id="KW-0067">ATP-binding</keyword>
<keyword id="KW-0963">Cytoplasm</keyword>
<keyword id="KW-0436">Ligase</keyword>
<keyword id="KW-0547">Nucleotide-binding</keyword>
<keyword id="KW-0648">Protein biosynthesis</keyword>
<dbReference type="EC" id="6.1.1.15" evidence="1"/>
<dbReference type="EMBL" id="AP006861">
    <property type="protein sequence ID" value="BAE81534.1"/>
    <property type="molecule type" value="Genomic_DNA"/>
</dbReference>
<dbReference type="RefSeq" id="WP_011458312.1">
    <property type="nucleotide sequence ID" value="NC_007899.1"/>
</dbReference>
<dbReference type="SMR" id="Q253K4"/>
<dbReference type="STRING" id="264202.CF0762"/>
<dbReference type="KEGG" id="cfe:CF0762"/>
<dbReference type="eggNOG" id="COG0442">
    <property type="taxonomic scope" value="Bacteria"/>
</dbReference>
<dbReference type="HOGENOM" id="CLU_016739_0_0_0"/>
<dbReference type="OrthoDB" id="9809052at2"/>
<dbReference type="Proteomes" id="UP000001260">
    <property type="component" value="Chromosome"/>
</dbReference>
<dbReference type="GO" id="GO:0005829">
    <property type="term" value="C:cytosol"/>
    <property type="evidence" value="ECO:0007669"/>
    <property type="project" value="TreeGrafter"/>
</dbReference>
<dbReference type="GO" id="GO:0002161">
    <property type="term" value="F:aminoacyl-tRNA deacylase activity"/>
    <property type="evidence" value="ECO:0007669"/>
    <property type="project" value="InterPro"/>
</dbReference>
<dbReference type="GO" id="GO:0005524">
    <property type="term" value="F:ATP binding"/>
    <property type="evidence" value="ECO:0007669"/>
    <property type="project" value="UniProtKB-UniRule"/>
</dbReference>
<dbReference type="GO" id="GO:0004827">
    <property type="term" value="F:proline-tRNA ligase activity"/>
    <property type="evidence" value="ECO:0007669"/>
    <property type="project" value="UniProtKB-UniRule"/>
</dbReference>
<dbReference type="GO" id="GO:0006433">
    <property type="term" value="P:prolyl-tRNA aminoacylation"/>
    <property type="evidence" value="ECO:0007669"/>
    <property type="project" value="UniProtKB-UniRule"/>
</dbReference>
<dbReference type="CDD" id="cd04334">
    <property type="entry name" value="ProRS-INS"/>
    <property type="match status" value="1"/>
</dbReference>
<dbReference type="CDD" id="cd00861">
    <property type="entry name" value="ProRS_anticodon_short"/>
    <property type="match status" value="1"/>
</dbReference>
<dbReference type="CDD" id="cd00779">
    <property type="entry name" value="ProRS_core_prok"/>
    <property type="match status" value="1"/>
</dbReference>
<dbReference type="Gene3D" id="3.40.50.800">
    <property type="entry name" value="Anticodon-binding domain"/>
    <property type="match status" value="1"/>
</dbReference>
<dbReference type="Gene3D" id="3.30.930.10">
    <property type="entry name" value="Bira Bifunctional Protein, Domain 2"/>
    <property type="match status" value="2"/>
</dbReference>
<dbReference type="Gene3D" id="3.90.960.10">
    <property type="entry name" value="YbaK/aminoacyl-tRNA synthetase-associated domain"/>
    <property type="match status" value="1"/>
</dbReference>
<dbReference type="HAMAP" id="MF_01569">
    <property type="entry name" value="Pro_tRNA_synth_type1"/>
    <property type="match status" value="1"/>
</dbReference>
<dbReference type="InterPro" id="IPR002314">
    <property type="entry name" value="aa-tRNA-synt_IIb"/>
</dbReference>
<dbReference type="InterPro" id="IPR006195">
    <property type="entry name" value="aa-tRNA-synth_II"/>
</dbReference>
<dbReference type="InterPro" id="IPR045864">
    <property type="entry name" value="aa-tRNA-synth_II/BPL/LPL"/>
</dbReference>
<dbReference type="InterPro" id="IPR004154">
    <property type="entry name" value="Anticodon-bd"/>
</dbReference>
<dbReference type="InterPro" id="IPR036621">
    <property type="entry name" value="Anticodon-bd_dom_sf"/>
</dbReference>
<dbReference type="InterPro" id="IPR002316">
    <property type="entry name" value="Pro-tRNA-ligase_IIa"/>
</dbReference>
<dbReference type="InterPro" id="IPR004500">
    <property type="entry name" value="Pro-tRNA-synth_IIa_bac-type"/>
</dbReference>
<dbReference type="InterPro" id="IPR023717">
    <property type="entry name" value="Pro-tRNA-Synthase_IIa_type1"/>
</dbReference>
<dbReference type="InterPro" id="IPR050062">
    <property type="entry name" value="Pro-tRNA_synthetase"/>
</dbReference>
<dbReference type="InterPro" id="IPR044140">
    <property type="entry name" value="ProRS_anticodon_short"/>
</dbReference>
<dbReference type="InterPro" id="IPR033730">
    <property type="entry name" value="ProRS_core_prok"/>
</dbReference>
<dbReference type="InterPro" id="IPR036754">
    <property type="entry name" value="YbaK/aa-tRNA-synt-asso_dom_sf"/>
</dbReference>
<dbReference type="InterPro" id="IPR007214">
    <property type="entry name" value="YbaK/aa-tRNA-synth-assoc-dom"/>
</dbReference>
<dbReference type="NCBIfam" id="NF006625">
    <property type="entry name" value="PRK09194.1"/>
    <property type="match status" value="1"/>
</dbReference>
<dbReference type="NCBIfam" id="TIGR00409">
    <property type="entry name" value="proS_fam_II"/>
    <property type="match status" value="1"/>
</dbReference>
<dbReference type="PANTHER" id="PTHR42753">
    <property type="entry name" value="MITOCHONDRIAL RIBOSOME PROTEIN L39/PROLYL-TRNA LIGASE FAMILY MEMBER"/>
    <property type="match status" value="1"/>
</dbReference>
<dbReference type="PANTHER" id="PTHR42753:SF2">
    <property type="entry name" value="PROLINE--TRNA LIGASE"/>
    <property type="match status" value="1"/>
</dbReference>
<dbReference type="Pfam" id="PF03129">
    <property type="entry name" value="HGTP_anticodon"/>
    <property type="match status" value="1"/>
</dbReference>
<dbReference type="Pfam" id="PF00587">
    <property type="entry name" value="tRNA-synt_2b"/>
    <property type="match status" value="1"/>
</dbReference>
<dbReference type="Pfam" id="PF04073">
    <property type="entry name" value="tRNA_edit"/>
    <property type="match status" value="1"/>
</dbReference>
<dbReference type="PRINTS" id="PR01046">
    <property type="entry name" value="TRNASYNTHPRO"/>
</dbReference>
<dbReference type="SUPFAM" id="SSF52954">
    <property type="entry name" value="Class II aaRS ABD-related"/>
    <property type="match status" value="1"/>
</dbReference>
<dbReference type="SUPFAM" id="SSF55681">
    <property type="entry name" value="Class II aaRS and biotin synthetases"/>
    <property type="match status" value="1"/>
</dbReference>
<dbReference type="SUPFAM" id="SSF55826">
    <property type="entry name" value="YbaK/ProRS associated domain"/>
    <property type="match status" value="1"/>
</dbReference>
<dbReference type="PROSITE" id="PS50862">
    <property type="entry name" value="AA_TRNA_LIGASE_II"/>
    <property type="match status" value="1"/>
</dbReference>